<keyword id="KW-0007">Acetylation</keyword>
<keyword id="KW-0175">Coiled coil</keyword>
<keyword id="KW-1017">Isopeptide bond</keyword>
<keyword id="KW-0507">mRNA processing</keyword>
<keyword id="KW-0508">mRNA splicing</keyword>
<keyword id="KW-0539">Nucleus</keyword>
<keyword id="KW-1185">Reference proteome</keyword>
<keyword id="KW-0747">Spliceosome</keyword>
<keyword id="KW-0832">Ubl conjugation</keyword>
<feature type="initiator methionine" description="Removed" evidence="1">
    <location>
        <position position="1"/>
    </location>
</feature>
<feature type="chain" id="PRO_0000250377" description="Pre-mRNA-splicing factor SYF2">
    <location>
        <begin position="2"/>
        <end position="242"/>
    </location>
</feature>
<feature type="coiled-coil region" evidence="2">
    <location>
        <begin position="65"/>
        <end position="91"/>
    </location>
</feature>
<feature type="modified residue" description="N-acetylalanine" evidence="1">
    <location>
        <position position="2"/>
    </location>
</feature>
<feature type="cross-link" description="Glycyl lysine isopeptide (Lys-Gly) (interchain with G-Cter in SUMO2)" evidence="1">
    <location>
        <position position="142"/>
    </location>
</feature>
<feature type="cross-link" description="Glycyl lysine isopeptide (Lys-Gly) (interchain with G-Cter in SUMO2)" evidence="1">
    <location>
        <position position="233"/>
    </location>
</feature>
<accession>Q9D198</accession>
<gene>
    <name type="primary">Syf2</name>
    <name type="synonym">Cbpin</name>
    <name type="synonym">Gcipip</name>
</gene>
<comment type="function">
    <text evidence="1">Involved in pre-mRNA splicing as component of the spliceosome.</text>
</comment>
<comment type="subunit">
    <text evidence="1">Identified in the spliceosome C complex. Interacts with CCNDBP1.</text>
</comment>
<comment type="subcellular location">
    <subcellularLocation>
        <location evidence="3">Nucleus</location>
    </subcellularLocation>
</comment>
<comment type="tissue specificity">
    <text evidence="3">Abundantly expressed in the heart, liver and kidney. Expressed at lower level other tissues.</text>
</comment>
<comment type="similarity">
    <text evidence="6">Belongs to the SYF2 family.</text>
</comment>
<organism>
    <name type="scientific">Mus musculus</name>
    <name type="common">Mouse</name>
    <dbReference type="NCBI Taxonomy" id="10090"/>
    <lineage>
        <taxon>Eukaryota</taxon>
        <taxon>Metazoa</taxon>
        <taxon>Chordata</taxon>
        <taxon>Craniata</taxon>
        <taxon>Vertebrata</taxon>
        <taxon>Euteleostomi</taxon>
        <taxon>Mammalia</taxon>
        <taxon>Eutheria</taxon>
        <taxon>Euarchontoglires</taxon>
        <taxon>Glires</taxon>
        <taxon>Rodentia</taxon>
        <taxon>Myomorpha</taxon>
        <taxon>Muroidea</taxon>
        <taxon>Muridae</taxon>
        <taxon>Murinae</taxon>
        <taxon>Mus</taxon>
        <taxon>Mus</taxon>
    </lineage>
</organism>
<protein>
    <recommendedName>
        <fullName>Pre-mRNA-splicing factor SYF2</fullName>
    </recommendedName>
    <alternativeName>
        <fullName>CCNDBP1-interactor</fullName>
    </alternativeName>
    <alternativeName>
        <fullName evidence="4">mp29</fullName>
    </alternativeName>
    <alternativeName>
        <fullName evidence="5">p29</fullName>
    </alternativeName>
</protein>
<reference key="1">
    <citation type="journal article" date="2002" name="Biochem. Biophys. Res. Commun.">
        <title>Cloning, expression, and genomic organization of mouse mp29 gene.</title>
        <authorList>
            <person name="Chang M.-S."/>
            <person name="Chen C.-Y."/>
            <person name="Yeh H.-I."/>
            <person name="Fan C.-C."/>
            <person name="Huang C.-J."/>
            <person name="Yang Y.-C."/>
        </authorList>
    </citation>
    <scope>NUCLEOTIDE SEQUENCE [MRNA]</scope>
    <scope>SUBCELLULAR LOCATION</scope>
    <scope>TISSUE SPECIFICITY</scope>
    <source>
        <strain>129/SvJ</strain>
    </source>
</reference>
<reference key="2">
    <citation type="submission" date="2001-04" db="EMBL/GenBank/DDBJ databases">
        <title>Identification of GCIP-interacting protein p29 (p29) in mouse.</title>
        <authorList>
            <person name="Xia C."/>
            <person name="Liu M."/>
        </authorList>
    </citation>
    <scope>NUCLEOTIDE SEQUENCE [MRNA]</scope>
</reference>
<reference key="3">
    <citation type="journal article" date="2005" name="Science">
        <title>The transcriptional landscape of the mammalian genome.</title>
        <authorList>
            <person name="Carninci P."/>
            <person name="Kasukawa T."/>
            <person name="Katayama S."/>
            <person name="Gough J."/>
            <person name="Frith M.C."/>
            <person name="Maeda N."/>
            <person name="Oyama R."/>
            <person name="Ravasi T."/>
            <person name="Lenhard B."/>
            <person name="Wells C."/>
            <person name="Kodzius R."/>
            <person name="Shimokawa K."/>
            <person name="Bajic V.B."/>
            <person name="Brenner S.E."/>
            <person name="Batalov S."/>
            <person name="Forrest A.R."/>
            <person name="Zavolan M."/>
            <person name="Davis M.J."/>
            <person name="Wilming L.G."/>
            <person name="Aidinis V."/>
            <person name="Allen J.E."/>
            <person name="Ambesi-Impiombato A."/>
            <person name="Apweiler R."/>
            <person name="Aturaliya R.N."/>
            <person name="Bailey T.L."/>
            <person name="Bansal M."/>
            <person name="Baxter L."/>
            <person name="Beisel K.W."/>
            <person name="Bersano T."/>
            <person name="Bono H."/>
            <person name="Chalk A.M."/>
            <person name="Chiu K.P."/>
            <person name="Choudhary V."/>
            <person name="Christoffels A."/>
            <person name="Clutterbuck D.R."/>
            <person name="Crowe M.L."/>
            <person name="Dalla E."/>
            <person name="Dalrymple B.P."/>
            <person name="de Bono B."/>
            <person name="Della Gatta G."/>
            <person name="di Bernardo D."/>
            <person name="Down T."/>
            <person name="Engstrom P."/>
            <person name="Fagiolini M."/>
            <person name="Faulkner G."/>
            <person name="Fletcher C.F."/>
            <person name="Fukushima T."/>
            <person name="Furuno M."/>
            <person name="Futaki S."/>
            <person name="Gariboldi M."/>
            <person name="Georgii-Hemming P."/>
            <person name="Gingeras T.R."/>
            <person name="Gojobori T."/>
            <person name="Green R.E."/>
            <person name="Gustincich S."/>
            <person name="Harbers M."/>
            <person name="Hayashi Y."/>
            <person name="Hensch T.K."/>
            <person name="Hirokawa N."/>
            <person name="Hill D."/>
            <person name="Huminiecki L."/>
            <person name="Iacono M."/>
            <person name="Ikeo K."/>
            <person name="Iwama A."/>
            <person name="Ishikawa T."/>
            <person name="Jakt M."/>
            <person name="Kanapin A."/>
            <person name="Katoh M."/>
            <person name="Kawasawa Y."/>
            <person name="Kelso J."/>
            <person name="Kitamura H."/>
            <person name="Kitano H."/>
            <person name="Kollias G."/>
            <person name="Krishnan S.P."/>
            <person name="Kruger A."/>
            <person name="Kummerfeld S.K."/>
            <person name="Kurochkin I.V."/>
            <person name="Lareau L.F."/>
            <person name="Lazarevic D."/>
            <person name="Lipovich L."/>
            <person name="Liu J."/>
            <person name="Liuni S."/>
            <person name="McWilliam S."/>
            <person name="Madan Babu M."/>
            <person name="Madera M."/>
            <person name="Marchionni L."/>
            <person name="Matsuda H."/>
            <person name="Matsuzawa S."/>
            <person name="Miki H."/>
            <person name="Mignone F."/>
            <person name="Miyake S."/>
            <person name="Morris K."/>
            <person name="Mottagui-Tabar S."/>
            <person name="Mulder N."/>
            <person name="Nakano N."/>
            <person name="Nakauchi H."/>
            <person name="Ng P."/>
            <person name="Nilsson R."/>
            <person name="Nishiguchi S."/>
            <person name="Nishikawa S."/>
            <person name="Nori F."/>
            <person name="Ohara O."/>
            <person name="Okazaki Y."/>
            <person name="Orlando V."/>
            <person name="Pang K.C."/>
            <person name="Pavan W.J."/>
            <person name="Pavesi G."/>
            <person name="Pesole G."/>
            <person name="Petrovsky N."/>
            <person name="Piazza S."/>
            <person name="Reed J."/>
            <person name="Reid J.F."/>
            <person name="Ring B.Z."/>
            <person name="Ringwald M."/>
            <person name="Rost B."/>
            <person name="Ruan Y."/>
            <person name="Salzberg S.L."/>
            <person name="Sandelin A."/>
            <person name="Schneider C."/>
            <person name="Schoenbach C."/>
            <person name="Sekiguchi K."/>
            <person name="Semple C.A."/>
            <person name="Seno S."/>
            <person name="Sessa L."/>
            <person name="Sheng Y."/>
            <person name="Shibata Y."/>
            <person name="Shimada H."/>
            <person name="Shimada K."/>
            <person name="Silva D."/>
            <person name="Sinclair B."/>
            <person name="Sperling S."/>
            <person name="Stupka E."/>
            <person name="Sugiura K."/>
            <person name="Sultana R."/>
            <person name="Takenaka Y."/>
            <person name="Taki K."/>
            <person name="Tammoja K."/>
            <person name="Tan S.L."/>
            <person name="Tang S."/>
            <person name="Taylor M.S."/>
            <person name="Tegner J."/>
            <person name="Teichmann S.A."/>
            <person name="Ueda H.R."/>
            <person name="van Nimwegen E."/>
            <person name="Verardo R."/>
            <person name="Wei C.L."/>
            <person name="Yagi K."/>
            <person name="Yamanishi H."/>
            <person name="Zabarovsky E."/>
            <person name="Zhu S."/>
            <person name="Zimmer A."/>
            <person name="Hide W."/>
            <person name="Bult C."/>
            <person name="Grimmond S.M."/>
            <person name="Teasdale R.D."/>
            <person name="Liu E.T."/>
            <person name="Brusic V."/>
            <person name="Quackenbush J."/>
            <person name="Wahlestedt C."/>
            <person name="Mattick J.S."/>
            <person name="Hume D.A."/>
            <person name="Kai C."/>
            <person name="Sasaki D."/>
            <person name="Tomaru Y."/>
            <person name="Fukuda S."/>
            <person name="Kanamori-Katayama M."/>
            <person name="Suzuki M."/>
            <person name="Aoki J."/>
            <person name="Arakawa T."/>
            <person name="Iida J."/>
            <person name="Imamura K."/>
            <person name="Itoh M."/>
            <person name="Kato T."/>
            <person name="Kawaji H."/>
            <person name="Kawagashira N."/>
            <person name="Kawashima T."/>
            <person name="Kojima M."/>
            <person name="Kondo S."/>
            <person name="Konno H."/>
            <person name="Nakano K."/>
            <person name="Ninomiya N."/>
            <person name="Nishio T."/>
            <person name="Okada M."/>
            <person name="Plessy C."/>
            <person name="Shibata K."/>
            <person name="Shiraki T."/>
            <person name="Suzuki S."/>
            <person name="Tagami M."/>
            <person name="Waki K."/>
            <person name="Watahiki A."/>
            <person name="Okamura-Oho Y."/>
            <person name="Suzuki H."/>
            <person name="Kawai J."/>
            <person name="Hayashizaki Y."/>
        </authorList>
    </citation>
    <scope>NUCLEOTIDE SEQUENCE [LARGE SCALE MRNA]</scope>
    <source>
        <strain>C57BL/6J</strain>
        <tissue>Bone marrow</tissue>
    </source>
</reference>
<reference key="4">
    <citation type="journal article" date="2004" name="Genome Res.">
        <title>The status, quality, and expansion of the NIH full-length cDNA project: the Mammalian Gene Collection (MGC).</title>
        <authorList>
            <consortium name="The MGC Project Team"/>
        </authorList>
    </citation>
    <scope>NUCLEOTIDE SEQUENCE [LARGE SCALE MRNA]</scope>
    <source>
        <strain>C57BL/6J</strain>
        <tissue>Mammary gland</tissue>
    </source>
</reference>
<sequence>MAAVTEVVVPADGAEARPLAAEELAAQKREQRLRKFRELHLKRNEARKLNHQEVVEEDKRLKLPANWEAKKARLEWELQEEEKKKECAARGEDYEKVKLLEISAEDAERWERRKKKKNPDLGFSDYAAAQLRQYHRLTKQIKPDMESYERQREKHGEDFFPTSNSLLHGTHVPSSEEIDRMVLDLEKQIEKRDKYSRRRPYNDDADIDYINERNAKFNKKAERFYGKYTAEIKQNLERGTAV</sequence>
<dbReference type="EMBL" id="AY155574">
    <property type="protein sequence ID" value="AAO06147.1"/>
    <property type="molecule type" value="Genomic_DNA"/>
</dbReference>
<dbReference type="EMBL" id="AY033432">
    <property type="protein sequence ID" value="AAK54459.1"/>
    <property type="molecule type" value="mRNA"/>
</dbReference>
<dbReference type="EMBL" id="AK003787">
    <property type="protein sequence ID" value="BAB22995.1"/>
    <property type="molecule type" value="mRNA"/>
</dbReference>
<dbReference type="EMBL" id="AK152794">
    <property type="protein sequence ID" value="BAE31500.1"/>
    <property type="molecule type" value="mRNA"/>
</dbReference>
<dbReference type="EMBL" id="BC051484">
    <property type="protein sequence ID" value="AAH51484.1"/>
    <property type="molecule type" value="mRNA"/>
</dbReference>
<dbReference type="CCDS" id="CCDS18781.1"/>
<dbReference type="RefSeq" id="NP_081056.1">
    <property type="nucleotide sequence ID" value="NM_026780.3"/>
</dbReference>
<dbReference type="SMR" id="Q9D198"/>
<dbReference type="BioGRID" id="212941">
    <property type="interactions" value="3"/>
</dbReference>
<dbReference type="FunCoup" id="Q9D198">
    <property type="interactions" value="2471"/>
</dbReference>
<dbReference type="IntAct" id="Q9D198">
    <property type="interactions" value="2"/>
</dbReference>
<dbReference type="MINT" id="Q9D198"/>
<dbReference type="STRING" id="10090.ENSMUSP00000030622"/>
<dbReference type="PhosphoSitePlus" id="Q9D198"/>
<dbReference type="PaxDb" id="10090-ENSMUSP00000030622"/>
<dbReference type="PeptideAtlas" id="Q9D198"/>
<dbReference type="ProteomicsDB" id="258686"/>
<dbReference type="Pumba" id="Q9D198"/>
<dbReference type="Antibodypedia" id="34977">
    <property type="antibodies" value="201 antibodies from 31 providers"/>
</dbReference>
<dbReference type="DNASU" id="68592"/>
<dbReference type="Ensembl" id="ENSMUST00000030622.3">
    <property type="protein sequence ID" value="ENSMUSP00000030622.3"/>
    <property type="gene ID" value="ENSMUSG00000028821.9"/>
</dbReference>
<dbReference type="GeneID" id="68592"/>
<dbReference type="KEGG" id="mmu:68592"/>
<dbReference type="UCSC" id="uc008vga.1">
    <property type="organism name" value="mouse"/>
</dbReference>
<dbReference type="AGR" id="MGI:1915842"/>
<dbReference type="CTD" id="25949"/>
<dbReference type="MGI" id="MGI:1915842">
    <property type="gene designation" value="Syf2"/>
</dbReference>
<dbReference type="VEuPathDB" id="HostDB:ENSMUSG00000028821"/>
<dbReference type="eggNOG" id="KOG2609">
    <property type="taxonomic scope" value="Eukaryota"/>
</dbReference>
<dbReference type="GeneTree" id="ENSGT00390000017845"/>
<dbReference type="HOGENOM" id="CLU_051065_3_0_1"/>
<dbReference type="InParanoid" id="Q9D198"/>
<dbReference type="OMA" id="RRRMHND"/>
<dbReference type="OrthoDB" id="199717at2759"/>
<dbReference type="PhylomeDB" id="Q9D198"/>
<dbReference type="TreeFam" id="TF313041"/>
<dbReference type="Reactome" id="R-MMU-72163">
    <property type="pathway name" value="mRNA Splicing - Major Pathway"/>
</dbReference>
<dbReference type="BioGRID-ORCS" id="68592">
    <property type="hits" value="18 hits in 79 CRISPR screens"/>
</dbReference>
<dbReference type="ChiTaRS" id="Syf2">
    <property type="organism name" value="mouse"/>
</dbReference>
<dbReference type="PRO" id="PR:Q9D198"/>
<dbReference type="Proteomes" id="UP000000589">
    <property type="component" value="Chromosome 4"/>
</dbReference>
<dbReference type="RNAct" id="Q9D198">
    <property type="molecule type" value="protein"/>
</dbReference>
<dbReference type="Bgee" id="ENSMUSG00000028821">
    <property type="expression patterns" value="Expressed in animal zygote and 264 other cell types or tissues"/>
</dbReference>
<dbReference type="GO" id="GO:0016607">
    <property type="term" value="C:nuclear speck"/>
    <property type="evidence" value="ECO:0007669"/>
    <property type="project" value="Ensembl"/>
</dbReference>
<dbReference type="GO" id="GO:0005634">
    <property type="term" value="C:nucleus"/>
    <property type="evidence" value="ECO:0000314"/>
    <property type="project" value="MGI"/>
</dbReference>
<dbReference type="GO" id="GO:0071007">
    <property type="term" value="C:U2-type catalytic step 2 spliceosome"/>
    <property type="evidence" value="ECO:0000250"/>
    <property type="project" value="UniProtKB"/>
</dbReference>
<dbReference type="GO" id="GO:0048568">
    <property type="term" value="P:embryonic organ development"/>
    <property type="evidence" value="ECO:0000315"/>
    <property type="project" value="MGI"/>
</dbReference>
<dbReference type="GO" id="GO:0007369">
    <property type="term" value="P:gastrulation"/>
    <property type="evidence" value="ECO:0000315"/>
    <property type="project" value="MGI"/>
</dbReference>
<dbReference type="GO" id="GO:0001701">
    <property type="term" value="P:in utero embryonic development"/>
    <property type="evidence" value="ECO:0000315"/>
    <property type="project" value="MGI"/>
</dbReference>
<dbReference type="GO" id="GO:0007095">
    <property type="term" value="P:mitotic G2 DNA damage checkpoint signaling"/>
    <property type="evidence" value="ECO:0000315"/>
    <property type="project" value="MGI"/>
</dbReference>
<dbReference type="GO" id="GO:0000398">
    <property type="term" value="P:mRNA splicing, via spliceosome"/>
    <property type="evidence" value="ECO:0000250"/>
    <property type="project" value="UniProtKB"/>
</dbReference>
<dbReference type="InterPro" id="IPR013260">
    <property type="entry name" value="mRNA_splic_SYF2"/>
</dbReference>
<dbReference type="PANTHER" id="PTHR13264">
    <property type="entry name" value="GCIP-INTERACTING PROTEIN P29"/>
    <property type="match status" value="1"/>
</dbReference>
<dbReference type="PANTHER" id="PTHR13264:SF5">
    <property type="entry name" value="PRE-MRNA-SPLICING FACTOR SYF2"/>
    <property type="match status" value="1"/>
</dbReference>
<dbReference type="Pfam" id="PF08231">
    <property type="entry name" value="SYF2"/>
    <property type="match status" value="1"/>
</dbReference>
<proteinExistence type="evidence at transcript level"/>
<name>SYF2_MOUSE</name>
<evidence type="ECO:0000250" key="1">
    <source>
        <dbReference type="UniProtKB" id="O95926"/>
    </source>
</evidence>
<evidence type="ECO:0000255" key="2"/>
<evidence type="ECO:0000269" key="3">
    <source>
    </source>
</evidence>
<evidence type="ECO:0000303" key="4">
    <source>
    </source>
</evidence>
<evidence type="ECO:0000303" key="5">
    <source ref="2"/>
</evidence>
<evidence type="ECO:0000305" key="6"/>